<organism>
    <name type="scientific">Methanothrix thermoacetophila (strain DSM 6194 / JCM 14653 / NBRC 101360 / PT)</name>
    <name type="common">Methanosaeta thermophila</name>
    <dbReference type="NCBI Taxonomy" id="349307"/>
    <lineage>
        <taxon>Archaea</taxon>
        <taxon>Methanobacteriati</taxon>
        <taxon>Methanobacteriota</taxon>
        <taxon>Stenosarchaea group</taxon>
        <taxon>Methanomicrobia</taxon>
        <taxon>Methanotrichales</taxon>
        <taxon>Methanotrichaceae</taxon>
        <taxon>Methanothrix</taxon>
    </lineage>
</organism>
<comment type="function">
    <text evidence="1">Catalyzes the transfer of the enolpyruvyl moiety of phosphoenolpyruvate (PEP) to the 5-hydroxyl of shikimate-3-phosphate (S3P) to produce enolpyruvyl shikimate-3-phosphate and inorganic phosphate.</text>
</comment>
<comment type="catalytic activity">
    <reaction evidence="1">
        <text>3-phosphoshikimate + phosphoenolpyruvate = 5-O-(1-carboxyvinyl)-3-phosphoshikimate + phosphate</text>
        <dbReference type="Rhea" id="RHEA:21256"/>
        <dbReference type="ChEBI" id="CHEBI:43474"/>
        <dbReference type="ChEBI" id="CHEBI:57701"/>
        <dbReference type="ChEBI" id="CHEBI:58702"/>
        <dbReference type="ChEBI" id="CHEBI:145989"/>
        <dbReference type="EC" id="2.5.1.19"/>
    </reaction>
    <physiologicalReaction direction="left-to-right" evidence="1">
        <dbReference type="Rhea" id="RHEA:21257"/>
    </physiologicalReaction>
</comment>
<comment type="pathway">
    <text evidence="1">Metabolic intermediate biosynthesis; chorismate biosynthesis.</text>
</comment>
<comment type="subunit">
    <text evidence="1">Monomer.</text>
</comment>
<comment type="subcellular location">
    <subcellularLocation>
        <location evidence="1">Cytoplasm</location>
    </subcellularLocation>
</comment>
<comment type="similarity">
    <text evidence="1">Belongs to the EPSP synthase family.</text>
</comment>
<protein>
    <recommendedName>
        <fullName evidence="1">3-phosphoshikimate 1-carboxyvinyltransferase</fullName>
        <ecNumber evidence="1">2.5.1.19</ecNumber>
    </recommendedName>
    <alternativeName>
        <fullName evidence="1">5-enolpyruvylshikimate-3-phosphate synthase</fullName>
        <shortName evidence="1">EPSP synthase</shortName>
        <shortName evidence="1">EPSPS</shortName>
    </alternativeName>
</protein>
<feature type="chain" id="PRO_1000012452" description="3-phosphoshikimate 1-carboxyvinyltransferase">
    <location>
        <begin position="1"/>
        <end position="421"/>
    </location>
</feature>
<feature type="active site" description="Proton acceptor" evidence="1">
    <location>
        <position position="304"/>
    </location>
</feature>
<feature type="binding site" evidence="1">
    <location>
        <position position="20"/>
    </location>
    <ligand>
        <name>3-phosphoshikimate</name>
        <dbReference type="ChEBI" id="CHEBI:145989"/>
    </ligand>
</feature>
<feature type="binding site" evidence="1">
    <location>
        <position position="20"/>
    </location>
    <ligand>
        <name>phosphoenolpyruvate</name>
        <dbReference type="ChEBI" id="CHEBI:58702"/>
    </ligand>
</feature>
<feature type="binding site" evidence="1">
    <location>
        <position position="21"/>
    </location>
    <ligand>
        <name>3-phosphoshikimate</name>
        <dbReference type="ChEBI" id="CHEBI:145989"/>
    </ligand>
</feature>
<feature type="binding site" evidence="1">
    <location>
        <position position="25"/>
    </location>
    <ligand>
        <name>3-phosphoshikimate</name>
        <dbReference type="ChEBI" id="CHEBI:145989"/>
    </ligand>
</feature>
<feature type="binding site" evidence="1">
    <location>
        <position position="90"/>
    </location>
    <ligand>
        <name>phosphoenolpyruvate</name>
        <dbReference type="ChEBI" id="CHEBI:58702"/>
    </ligand>
</feature>
<feature type="binding site" evidence="1">
    <location>
        <position position="117"/>
    </location>
    <ligand>
        <name>phosphoenolpyruvate</name>
        <dbReference type="ChEBI" id="CHEBI:58702"/>
    </ligand>
</feature>
<feature type="binding site" evidence="1">
    <location>
        <position position="162"/>
    </location>
    <ligand>
        <name>3-phosphoshikimate</name>
        <dbReference type="ChEBI" id="CHEBI:145989"/>
    </ligand>
</feature>
<feature type="binding site" evidence="1">
    <location>
        <position position="163"/>
    </location>
    <ligand>
        <name>3-phosphoshikimate</name>
        <dbReference type="ChEBI" id="CHEBI:145989"/>
    </ligand>
</feature>
<feature type="binding site" evidence="1">
    <location>
        <position position="164"/>
    </location>
    <ligand>
        <name>3-phosphoshikimate</name>
        <dbReference type="ChEBI" id="CHEBI:145989"/>
    </ligand>
</feature>
<feature type="binding site" evidence="1">
    <location>
        <position position="164"/>
    </location>
    <ligand>
        <name>phosphoenolpyruvate</name>
        <dbReference type="ChEBI" id="CHEBI:58702"/>
    </ligand>
</feature>
<feature type="binding site" evidence="1">
    <location>
        <position position="190"/>
    </location>
    <ligand>
        <name>3-phosphoshikimate</name>
        <dbReference type="ChEBI" id="CHEBI:145989"/>
    </ligand>
</feature>
<feature type="binding site" evidence="1">
    <location>
        <position position="304"/>
    </location>
    <ligand>
        <name>3-phosphoshikimate</name>
        <dbReference type="ChEBI" id="CHEBI:145989"/>
    </ligand>
</feature>
<feature type="binding site" evidence="1">
    <location>
        <position position="331"/>
    </location>
    <ligand>
        <name>3-phosphoshikimate</name>
        <dbReference type="ChEBI" id="CHEBI:145989"/>
    </ligand>
</feature>
<feature type="binding site" evidence="1">
    <location>
        <position position="335"/>
    </location>
    <ligand>
        <name>phosphoenolpyruvate</name>
        <dbReference type="ChEBI" id="CHEBI:58702"/>
    </ligand>
</feature>
<feature type="binding site" evidence="1">
    <location>
        <position position="376"/>
    </location>
    <ligand>
        <name>phosphoenolpyruvate</name>
        <dbReference type="ChEBI" id="CHEBI:58702"/>
    </ligand>
</feature>
<proteinExistence type="inferred from homology"/>
<reference key="1">
    <citation type="submission" date="2006-10" db="EMBL/GenBank/DDBJ databases">
        <title>Complete sequence of Methanosaeta thermophila PT.</title>
        <authorList>
            <consortium name="US DOE Joint Genome Institute"/>
            <person name="Copeland A."/>
            <person name="Lucas S."/>
            <person name="Lapidus A."/>
            <person name="Barry K."/>
            <person name="Detter J.C."/>
            <person name="Glavina del Rio T."/>
            <person name="Hammon N."/>
            <person name="Israni S."/>
            <person name="Pitluck S."/>
            <person name="Chain P."/>
            <person name="Malfatti S."/>
            <person name="Shin M."/>
            <person name="Vergez L."/>
            <person name="Schmutz J."/>
            <person name="Larimer F."/>
            <person name="Land M."/>
            <person name="Hauser L."/>
            <person name="Kyrpides N."/>
            <person name="Kim E."/>
            <person name="Smith K.S."/>
            <person name="Ingram-Smith C."/>
            <person name="Richardson P."/>
        </authorList>
    </citation>
    <scope>NUCLEOTIDE SEQUENCE [LARGE SCALE GENOMIC DNA]</scope>
    <source>
        <strain>DSM 6194 / JCM 14653 / NBRC 101360 / PT</strain>
    </source>
</reference>
<evidence type="ECO:0000255" key="1">
    <source>
        <dbReference type="HAMAP-Rule" id="MF_00210"/>
    </source>
</evidence>
<gene>
    <name evidence="1" type="primary">aroA</name>
    <name type="ordered locus">Mthe_1029</name>
</gene>
<sequence>MIVSVSRSSISGTVCAPPSKSYTHRAVLITALSDSGCVHRPLISADTRATISACDAFGADVKLRGDSLEIQGVSGAPRTPENVIDVLNSGTTLRFMSAVAALTDGAVLTGDSSIRSRPNGPLLKALNELGAEAFSIRGNDRAPLVIRGRLRGGSTSLDGSVSSQFLSALLIACPLSSGETTISIKGELKSRPYAEMTLDILRKAGAEICTDGDIFRMRGGQSYRLAEYTVPGDFSSASYPLAAAALAGSATVEGLFPSRQGDSAIVDILREMGAEVSWDMESGEVRVSGADLRGREIDASQTPDLVPTLAVLGAVAEGRTVIKNAEHVRHKETDRIHAMAVELKKMGANIRERPDGLEIDGGDLHGADLHGYHDHRIVMALTLAGIVAGDTRIDTAESVDVSYPGFFEDMRRLGANVRAST</sequence>
<dbReference type="EC" id="2.5.1.19" evidence="1"/>
<dbReference type="EMBL" id="CP000477">
    <property type="protein sequence ID" value="ABK14814.1"/>
    <property type="molecule type" value="Genomic_DNA"/>
</dbReference>
<dbReference type="RefSeq" id="WP_011696207.1">
    <property type="nucleotide sequence ID" value="NC_008553.1"/>
</dbReference>
<dbReference type="SMR" id="A0B7Z0"/>
<dbReference type="STRING" id="349307.Mthe_1029"/>
<dbReference type="GeneID" id="4462778"/>
<dbReference type="KEGG" id="mtp:Mthe_1029"/>
<dbReference type="HOGENOM" id="CLU_024321_0_0_2"/>
<dbReference type="OrthoDB" id="43788at2157"/>
<dbReference type="UniPathway" id="UPA00053"/>
<dbReference type="Proteomes" id="UP000000674">
    <property type="component" value="Chromosome"/>
</dbReference>
<dbReference type="GO" id="GO:0005737">
    <property type="term" value="C:cytoplasm"/>
    <property type="evidence" value="ECO:0007669"/>
    <property type="project" value="UniProtKB-SubCell"/>
</dbReference>
<dbReference type="GO" id="GO:0003866">
    <property type="term" value="F:3-phosphoshikimate 1-carboxyvinyltransferase activity"/>
    <property type="evidence" value="ECO:0007669"/>
    <property type="project" value="UniProtKB-UniRule"/>
</dbReference>
<dbReference type="GO" id="GO:0008652">
    <property type="term" value="P:amino acid biosynthetic process"/>
    <property type="evidence" value="ECO:0007669"/>
    <property type="project" value="UniProtKB-KW"/>
</dbReference>
<dbReference type="GO" id="GO:0009073">
    <property type="term" value="P:aromatic amino acid family biosynthetic process"/>
    <property type="evidence" value="ECO:0007669"/>
    <property type="project" value="UniProtKB-KW"/>
</dbReference>
<dbReference type="GO" id="GO:0009423">
    <property type="term" value="P:chorismate biosynthetic process"/>
    <property type="evidence" value="ECO:0007669"/>
    <property type="project" value="UniProtKB-UniRule"/>
</dbReference>
<dbReference type="CDD" id="cd01556">
    <property type="entry name" value="EPSP_synthase"/>
    <property type="match status" value="1"/>
</dbReference>
<dbReference type="Gene3D" id="3.65.10.10">
    <property type="entry name" value="Enolpyruvate transferase domain"/>
    <property type="match status" value="2"/>
</dbReference>
<dbReference type="HAMAP" id="MF_00210">
    <property type="entry name" value="EPSP_synth"/>
    <property type="match status" value="1"/>
</dbReference>
<dbReference type="InterPro" id="IPR001986">
    <property type="entry name" value="Enolpyruvate_Tfrase_dom"/>
</dbReference>
<dbReference type="InterPro" id="IPR036968">
    <property type="entry name" value="Enolpyruvate_Tfrase_sf"/>
</dbReference>
<dbReference type="InterPro" id="IPR006264">
    <property type="entry name" value="EPSP_synthase"/>
</dbReference>
<dbReference type="InterPro" id="IPR023193">
    <property type="entry name" value="EPSP_synthase_CS"/>
</dbReference>
<dbReference type="InterPro" id="IPR013792">
    <property type="entry name" value="RNA3'P_cycl/enolpyr_Trfase_a/b"/>
</dbReference>
<dbReference type="NCBIfam" id="TIGR01356">
    <property type="entry name" value="aroA"/>
    <property type="match status" value="1"/>
</dbReference>
<dbReference type="PANTHER" id="PTHR21090">
    <property type="entry name" value="AROM/DEHYDROQUINATE SYNTHASE"/>
    <property type="match status" value="1"/>
</dbReference>
<dbReference type="PANTHER" id="PTHR21090:SF5">
    <property type="entry name" value="PENTAFUNCTIONAL AROM POLYPEPTIDE"/>
    <property type="match status" value="1"/>
</dbReference>
<dbReference type="Pfam" id="PF00275">
    <property type="entry name" value="EPSP_synthase"/>
    <property type="match status" value="1"/>
</dbReference>
<dbReference type="PIRSF" id="PIRSF000505">
    <property type="entry name" value="EPSPS"/>
    <property type="match status" value="1"/>
</dbReference>
<dbReference type="SUPFAM" id="SSF55205">
    <property type="entry name" value="EPT/RTPC-like"/>
    <property type="match status" value="1"/>
</dbReference>
<dbReference type="PROSITE" id="PS00885">
    <property type="entry name" value="EPSP_SYNTHASE_2"/>
    <property type="match status" value="1"/>
</dbReference>
<accession>A0B7Z0</accession>
<keyword id="KW-0028">Amino-acid biosynthesis</keyword>
<keyword id="KW-0057">Aromatic amino acid biosynthesis</keyword>
<keyword id="KW-0963">Cytoplasm</keyword>
<keyword id="KW-1185">Reference proteome</keyword>
<keyword id="KW-0808">Transferase</keyword>
<name>AROA_METTP</name>